<reference key="1">
    <citation type="journal article" date="2005" name="J. Bacteriol.">
        <title>Whole-genome sequencing of Staphylococcus haemolyticus uncovers the extreme plasticity of its genome and the evolution of human-colonizing staphylococcal species.</title>
        <authorList>
            <person name="Takeuchi F."/>
            <person name="Watanabe S."/>
            <person name="Baba T."/>
            <person name="Yuzawa H."/>
            <person name="Ito T."/>
            <person name="Morimoto Y."/>
            <person name="Kuroda M."/>
            <person name="Cui L."/>
            <person name="Takahashi M."/>
            <person name="Ankai A."/>
            <person name="Baba S."/>
            <person name="Fukui S."/>
            <person name="Lee J.C."/>
            <person name="Hiramatsu K."/>
        </authorList>
    </citation>
    <scope>NUCLEOTIDE SEQUENCE [LARGE SCALE GENOMIC DNA]</scope>
    <source>
        <strain>JCSC1435</strain>
    </source>
</reference>
<evidence type="ECO:0000255" key="1">
    <source>
        <dbReference type="HAMAP-Rule" id="MF_01333"/>
    </source>
</evidence>
<evidence type="ECO:0000305" key="2"/>
<proteinExistence type="inferred from homology"/>
<protein>
    <recommendedName>
        <fullName evidence="1">Large ribosomal subunit protein uL5</fullName>
    </recommendedName>
    <alternativeName>
        <fullName evidence="2">50S ribosomal protein L5</fullName>
    </alternativeName>
</protein>
<organism>
    <name type="scientific">Staphylococcus haemolyticus (strain JCSC1435)</name>
    <dbReference type="NCBI Taxonomy" id="279808"/>
    <lineage>
        <taxon>Bacteria</taxon>
        <taxon>Bacillati</taxon>
        <taxon>Bacillota</taxon>
        <taxon>Bacilli</taxon>
        <taxon>Bacillales</taxon>
        <taxon>Staphylococcaceae</taxon>
        <taxon>Staphylococcus</taxon>
    </lineage>
</organism>
<comment type="function">
    <text evidence="1">This is one of the proteins that bind and probably mediate the attachment of the 5S RNA into the large ribosomal subunit, where it forms part of the central protuberance. In the 70S ribosome it contacts protein S13 of the 30S subunit (bridge B1b), connecting the 2 subunits; this bridge is implicated in subunit movement. Contacts the P site tRNA; the 5S rRNA and some of its associated proteins might help stabilize positioning of ribosome-bound tRNAs.</text>
</comment>
<comment type="subunit">
    <text evidence="1">Part of the 50S ribosomal subunit; part of the 5S rRNA/L5/L18/L25 subcomplex. Contacts the 5S rRNA and the P site tRNA. Forms a bridge to the 30S subunit in the 70S ribosome.</text>
</comment>
<comment type="similarity">
    <text evidence="1">Belongs to the universal ribosomal protein uL5 family.</text>
</comment>
<name>RL5_STAHJ</name>
<sequence>MNRLKERYNTEVTENLVKKFNYSSVMEVPKIEKIVVNMGVGDAVQNSKVLDNAVEELELITGQKPLVTKAKKSVATFRLREGMPIGAKVTLRGERMYEFLDKLIAVSLPRVRDFQGVSKTAFDGRGNYTLGIKEQLIFPEIDYDKVSKVRGMDIVIVTTANTDEEARELLTNFGMPFRK</sequence>
<keyword id="KW-0687">Ribonucleoprotein</keyword>
<keyword id="KW-0689">Ribosomal protein</keyword>
<keyword id="KW-0694">RNA-binding</keyword>
<keyword id="KW-0699">rRNA-binding</keyword>
<keyword id="KW-0820">tRNA-binding</keyword>
<dbReference type="EMBL" id="AP006716">
    <property type="protein sequence ID" value="BAE04123.1"/>
    <property type="molecule type" value="Genomic_DNA"/>
</dbReference>
<dbReference type="RefSeq" id="WP_011275133.1">
    <property type="nucleotide sequence ID" value="NC_007168.1"/>
</dbReference>
<dbReference type="SMR" id="Q4L8A2"/>
<dbReference type="GeneID" id="93780203"/>
<dbReference type="KEGG" id="sha:SH0814"/>
<dbReference type="eggNOG" id="COG0094">
    <property type="taxonomic scope" value="Bacteria"/>
</dbReference>
<dbReference type="HOGENOM" id="CLU_061015_2_1_9"/>
<dbReference type="OrthoDB" id="9806626at2"/>
<dbReference type="Proteomes" id="UP000000543">
    <property type="component" value="Chromosome"/>
</dbReference>
<dbReference type="GO" id="GO:1990904">
    <property type="term" value="C:ribonucleoprotein complex"/>
    <property type="evidence" value="ECO:0007669"/>
    <property type="project" value="UniProtKB-KW"/>
</dbReference>
<dbReference type="GO" id="GO:0005840">
    <property type="term" value="C:ribosome"/>
    <property type="evidence" value="ECO:0007669"/>
    <property type="project" value="UniProtKB-KW"/>
</dbReference>
<dbReference type="GO" id="GO:0019843">
    <property type="term" value="F:rRNA binding"/>
    <property type="evidence" value="ECO:0007669"/>
    <property type="project" value="UniProtKB-UniRule"/>
</dbReference>
<dbReference type="GO" id="GO:0003735">
    <property type="term" value="F:structural constituent of ribosome"/>
    <property type="evidence" value="ECO:0007669"/>
    <property type="project" value="InterPro"/>
</dbReference>
<dbReference type="GO" id="GO:0000049">
    <property type="term" value="F:tRNA binding"/>
    <property type="evidence" value="ECO:0007669"/>
    <property type="project" value="UniProtKB-UniRule"/>
</dbReference>
<dbReference type="GO" id="GO:0006412">
    <property type="term" value="P:translation"/>
    <property type="evidence" value="ECO:0007669"/>
    <property type="project" value="UniProtKB-UniRule"/>
</dbReference>
<dbReference type="FunFam" id="3.30.1440.10:FF:000001">
    <property type="entry name" value="50S ribosomal protein L5"/>
    <property type="match status" value="1"/>
</dbReference>
<dbReference type="Gene3D" id="3.30.1440.10">
    <property type="match status" value="1"/>
</dbReference>
<dbReference type="HAMAP" id="MF_01333_B">
    <property type="entry name" value="Ribosomal_uL5_B"/>
    <property type="match status" value="1"/>
</dbReference>
<dbReference type="InterPro" id="IPR002132">
    <property type="entry name" value="Ribosomal_uL5"/>
</dbReference>
<dbReference type="InterPro" id="IPR020930">
    <property type="entry name" value="Ribosomal_uL5_bac-type"/>
</dbReference>
<dbReference type="InterPro" id="IPR031309">
    <property type="entry name" value="Ribosomal_uL5_C"/>
</dbReference>
<dbReference type="InterPro" id="IPR020929">
    <property type="entry name" value="Ribosomal_uL5_CS"/>
</dbReference>
<dbReference type="InterPro" id="IPR022803">
    <property type="entry name" value="Ribosomal_uL5_dom_sf"/>
</dbReference>
<dbReference type="InterPro" id="IPR031310">
    <property type="entry name" value="Ribosomal_uL5_N"/>
</dbReference>
<dbReference type="NCBIfam" id="NF000585">
    <property type="entry name" value="PRK00010.1"/>
    <property type="match status" value="1"/>
</dbReference>
<dbReference type="PANTHER" id="PTHR11994">
    <property type="entry name" value="60S RIBOSOMAL PROTEIN L11-RELATED"/>
    <property type="match status" value="1"/>
</dbReference>
<dbReference type="Pfam" id="PF00281">
    <property type="entry name" value="Ribosomal_L5"/>
    <property type="match status" value="1"/>
</dbReference>
<dbReference type="Pfam" id="PF00673">
    <property type="entry name" value="Ribosomal_L5_C"/>
    <property type="match status" value="1"/>
</dbReference>
<dbReference type="PIRSF" id="PIRSF002161">
    <property type="entry name" value="Ribosomal_L5"/>
    <property type="match status" value="1"/>
</dbReference>
<dbReference type="SUPFAM" id="SSF55282">
    <property type="entry name" value="RL5-like"/>
    <property type="match status" value="1"/>
</dbReference>
<dbReference type="PROSITE" id="PS00358">
    <property type="entry name" value="RIBOSOMAL_L5"/>
    <property type="match status" value="1"/>
</dbReference>
<feature type="chain" id="PRO_0000124994" description="Large ribosomal subunit protein uL5">
    <location>
        <begin position="1"/>
        <end position="179"/>
    </location>
</feature>
<accession>Q4L8A2</accession>
<gene>
    <name evidence="1" type="primary">rplE</name>
    <name type="ordered locus">SH0814</name>
</gene>